<reference key="1">
    <citation type="submission" date="1997-11" db="EMBL/GenBank/DDBJ databases">
        <title>Sequence of the Bacillus subtilis chromosome from ykuA to cse-15.</title>
        <authorList>
            <person name="Scanlan E."/>
            <person name="Devine K.M."/>
        </authorList>
    </citation>
    <scope>NUCLEOTIDE SEQUENCE [GENOMIC DNA]</scope>
    <source>
        <strain>168</strain>
    </source>
</reference>
<reference key="2">
    <citation type="journal article" date="1997" name="Nature">
        <title>The complete genome sequence of the Gram-positive bacterium Bacillus subtilis.</title>
        <authorList>
            <person name="Kunst F."/>
            <person name="Ogasawara N."/>
            <person name="Moszer I."/>
            <person name="Albertini A.M."/>
            <person name="Alloni G."/>
            <person name="Azevedo V."/>
            <person name="Bertero M.G."/>
            <person name="Bessieres P."/>
            <person name="Bolotin A."/>
            <person name="Borchert S."/>
            <person name="Borriss R."/>
            <person name="Boursier L."/>
            <person name="Brans A."/>
            <person name="Braun M."/>
            <person name="Brignell S.C."/>
            <person name="Bron S."/>
            <person name="Brouillet S."/>
            <person name="Bruschi C.V."/>
            <person name="Caldwell B."/>
            <person name="Capuano V."/>
            <person name="Carter N.M."/>
            <person name="Choi S.-K."/>
            <person name="Codani J.-J."/>
            <person name="Connerton I.F."/>
            <person name="Cummings N.J."/>
            <person name="Daniel R.A."/>
            <person name="Denizot F."/>
            <person name="Devine K.M."/>
            <person name="Duesterhoeft A."/>
            <person name="Ehrlich S.D."/>
            <person name="Emmerson P.T."/>
            <person name="Entian K.-D."/>
            <person name="Errington J."/>
            <person name="Fabret C."/>
            <person name="Ferrari E."/>
            <person name="Foulger D."/>
            <person name="Fritz C."/>
            <person name="Fujita M."/>
            <person name="Fujita Y."/>
            <person name="Fuma S."/>
            <person name="Galizzi A."/>
            <person name="Galleron N."/>
            <person name="Ghim S.-Y."/>
            <person name="Glaser P."/>
            <person name="Goffeau A."/>
            <person name="Golightly E.J."/>
            <person name="Grandi G."/>
            <person name="Guiseppi G."/>
            <person name="Guy B.J."/>
            <person name="Haga K."/>
            <person name="Haiech J."/>
            <person name="Harwood C.R."/>
            <person name="Henaut A."/>
            <person name="Hilbert H."/>
            <person name="Holsappel S."/>
            <person name="Hosono S."/>
            <person name="Hullo M.-F."/>
            <person name="Itaya M."/>
            <person name="Jones L.-M."/>
            <person name="Joris B."/>
            <person name="Karamata D."/>
            <person name="Kasahara Y."/>
            <person name="Klaerr-Blanchard M."/>
            <person name="Klein C."/>
            <person name="Kobayashi Y."/>
            <person name="Koetter P."/>
            <person name="Koningstein G."/>
            <person name="Krogh S."/>
            <person name="Kumano M."/>
            <person name="Kurita K."/>
            <person name="Lapidus A."/>
            <person name="Lardinois S."/>
            <person name="Lauber J."/>
            <person name="Lazarevic V."/>
            <person name="Lee S.-M."/>
            <person name="Levine A."/>
            <person name="Liu H."/>
            <person name="Masuda S."/>
            <person name="Mauel C."/>
            <person name="Medigue C."/>
            <person name="Medina N."/>
            <person name="Mellado R.P."/>
            <person name="Mizuno M."/>
            <person name="Moestl D."/>
            <person name="Nakai S."/>
            <person name="Noback M."/>
            <person name="Noone D."/>
            <person name="O'Reilly M."/>
            <person name="Ogawa K."/>
            <person name="Ogiwara A."/>
            <person name="Oudega B."/>
            <person name="Park S.-H."/>
            <person name="Parro V."/>
            <person name="Pohl T.M."/>
            <person name="Portetelle D."/>
            <person name="Porwollik S."/>
            <person name="Prescott A.M."/>
            <person name="Presecan E."/>
            <person name="Pujic P."/>
            <person name="Purnelle B."/>
            <person name="Rapoport G."/>
            <person name="Rey M."/>
            <person name="Reynolds S."/>
            <person name="Rieger M."/>
            <person name="Rivolta C."/>
            <person name="Rocha E."/>
            <person name="Roche B."/>
            <person name="Rose M."/>
            <person name="Sadaie Y."/>
            <person name="Sato T."/>
            <person name="Scanlan E."/>
            <person name="Schleich S."/>
            <person name="Schroeter R."/>
            <person name="Scoffone F."/>
            <person name="Sekiguchi J."/>
            <person name="Sekowska A."/>
            <person name="Seror S.J."/>
            <person name="Serror P."/>
            <person name="Shin B.-S."/>
            <person name="Soldo B."/>
            <person name="Sorokin A."/>
            <person name="Tacconi E."/>
            <person name="Takagi T."/>
            <person name="Takahashi H."/>
            <person name="Takemaru K."/>
            <person name="Takeuchi M."/>
            <person name="Tamakoshi A."/>
            <person name="Tanaka T."/>
            <person name="Terpstra P."/>
            <person name="Tognoni A."/>
            <person name="Tosato V."/>
            <person name="Uchiyama S."/>
            <person name="Vandenbol M."/>
            <person name="Vannier F."/>
            <person name="Vassarotti A."/>
            <person name="Viari A."/>
            <person name="Wambutt R."/>
            <person name="Wedler E."/>
            <person name="Wedler H."/>
            <person name="Weitzenegger T."/>
            <person name="Winters P."/>
            <person name="Wipat A."/>
            <person name="Yamamoto H."/>
            <person name="Yamane K."/>
            <person name="Yasumoto K."/>
            <person name="Yata K."/>
            <person name="Yoshida K."/>
            <person name="Yoshikawa H.-F."/>
            <person name="Zumstein E."/>
            <person name="Yoshikawa H."/>
            <person name="Danchin A."/>
        </authorList>
    </citation>
    <scope>NUCLEOTIDE SEQUENCE [LARGE SCALE GENOMIC DNA]</scope>
    <source>
        <strain>168</strain>
    </source>
</reference>
<reference key="3">
    <citation type="journal article" date="2012" name="Mol. Microbiol.">
        <title>The biofilm formation defect of a Bacillus subtilis flotillin-defective mutant involves the protease FtsH.</title>
        <authorList>
            <person name="Yepes A."/>
            <person name="Schneider J."/>
            <person name="Mielich B."/>
            <person name="Koch G."/>
            <person name="Garcia-Betancur J.C."/>
            <person name="Ramamurthi K.S."/>
            <person name="Vlamakis H."/>
            <person name="Lopez D."/>
        </authorList>
    </citation>
    <scope>IDENTIFICATION BY MASS SPECTROMETRY</scope>
    <scope>SUBCELLULAR LOCATION</scope>
    <source>
        <strain>168 / Marburg / ATCC 6051 / DSM 10 / JCM 1465 / NBRC 13719 / NCIMB 3610 / NRRL NRS-744 / VKM B-501</strain>
    </source>
</reference>
<keyword id="KW-1003">Cell membrane</keyword>
<keyword id="KW-0472">Membrane</keyword>
<keyword id="KW-0520">NAD</keyword>
<keyword id="KW-0560">Oxidoreductase</keyword>
<keyword id="KW-1185">Reference proteome</keyword>
<accession>O34948</accession>
<gene>
    <name type="primary">ykwC</name>
    <name type="ordered locus">BSU13960</name>
</gene>
<proteinExistence type="evidence at protein level"/>
<evidence type="ECO:0000250" key="1"/>
<evidence type="ECO:0000269" key="2">
    <source>
    </source>
</evidence>
<evidence type="ECO:0000305" key="3"/>
<comment type="subcellular location">
    <subcellularLocation>
        <location evidence="2">Cell membrane</location>
    </subcellularLocation>
    <subcellularLocation>
        <location evidence="2">Membrane raft</location>
    </subcellularLocation>
    <text evidence="2">Present in detergent-resistant membrane (DRM) fractions that may be equivalent to eukaryotic membrane rafts; these rafts include proteins involved in signaling, molecule trafficking and protein secretion.</text>
</comment>
<comment type="similarity">
    <text evidence="3">Belongs to the HIBADH-related family.</text>
</comment>
<name>YKWC_BACSU</name>
<dbReference type="EC" id="1.1.-.-"/>
<dbReference type="EMBL" id="AJ222587">
    <property type="protein sequence ID" value="CAA10859.1"/>
    <property type="molecule type" value="Genomic_DNA"/>
</dbReference>
<dbReference type="EMBL" id="AL009126">
    <property type="protein sequence ID" value="CAB13269.1"/>
    <property type="molecule type" value="Genomic_DNA"/>
</dbReference>
<dbReference type="PIR" id="B69870">
    <property type="entry name" value="B69870"/>
</dbReference>
<dbReference type="RefSeq" id="WP_003245029.1">
    <property type="nucleotide sequence ID" value="NZ_OZ025638.1"/>
</dbReference>
<dbReference type="SMR" id="O34948"/>
<dbReference type="FunCoup" id="O34948">
    <property type="interactions" value="560"/>
</dbReference>
<dbReference type="IntAct" id="O34948">
    <property type="interactions" value="1"/>
</dbReference>
<dbReference type="MINT" id="O34948"/>
<dbReference type="STRING" id="224308.BSU13960"/>
<dbReference type="jPOST" id="O34948"/>
<dbReference type="PaxDb" id="224308-BSU13960"/>
<dbReference type="EnsemblBacteria" id="CAB13269">
    <property type="protein sequence ID" value="CAB13269"/>
    <property type="gene ID" value="BSU_13960"/>
</dbReference>
<dbReference type="GeneID" id="939723"/>
<dbReference type="KEGG" id="bsu:BSU13960"/>
<dbReference type="PATRIC" id="fig|224308.179.peg.1522"/>
<dbReference type="eggNOG" id="COG2084">
    <property type="taxonomic scope" value="Bacteria"/>
</dbReference>
<dbReference type="InParanoid" id="O34948"/>
<dbReference type="OrthoDB" id="9786703at2"/>
<dbReference type="PhylomeDB" id="O34948"/>
<dbReference type="BioCyc" id="BSUB:BSU13960-MONOMER"/>
<dbReference type="Proteomes" id="UP000001570">
    <property type="component" value="Chromosome"/>
</dbReference>
<dbReference type="GO" id="GO:0045121">
    <property type="term" value="C:membrane raft"/>
    <property type="evidence" value="ECO:0007669"/>
    <property type="project" value="UniProtKB-SubCell"/>
</dbReference>
<dbReference type="GO" id="GO:0005886">
    <property type="term" value="C:plasma membrane"/>
    <property type="evidence" value="ECO:0007669"/>
    <property type="project" value="UniProtKB-SubCell"/>
</dbReference>
<dbReference type="GO" id="GO:0051287">
    <property type="term" value="F:NAD binding"/>
    <property type="evidence" value="ECO:0007669"/>
    <property type="project" value="InterPro"/>
</dbReference>
<dbReference type="GO" id="GO:0050661">
    <property type="term" value="F:NADP binding"/>
    <property type="evidence" value="ECO:0007669"/>
    <property type="project" value="InterPro"/>
</dbReference>
<dbReference type="GO" id="GO:0016491">
    <property type="term" value="F:oxidoreductase activity"/>
    <property type="evidence" value="ECO:0007669"/>
    <property type="project" value="UniProtKB-KW"/>
</dbReference>
<dbReference type="GO" id="GO:0016054">
    <property type="term" value="P:organic acid catabolic process"/>
    <property type="evidence" value="ECO:0007669"/>
    <property type="project" value="UniProtKB-ARBA"/>
</dbReference>
<dbReference type="Gene3D" id="1.10.1040.10">
    <property type="entry name" value="N-(1-d-carboxylethyl)-l-norvaline Dehydrogenase, domain 2"/>
    <property type="match status" value="1"/>
</dbReference>
<dbReference type="Gene3D" id="3.40.50.720">
    <property type="entry name" value="NAD(P)-binding Rossmann-like Domain"/>
    <property type="match status" value="1"/>
</dbReference>
<dbReference type="InterPro" id="IPR002204">
    <property type="entry name" value="3-OH-isobutyrate_DH-rel_CS"/>
</dbReference>
<dbReference type="InterPro" id="IPR008927">
    <property type="entry name" value="6-PGluconate_DH-like_C_sf"/>
</dbReference>
<dbReference type="InterPro" id="IPR013328">
    <property type="entry name" value="6PGD_dom2"/>
</dbReference>
<dbReference type="InterPro" id="IPR006115">
    <property type="entry name" value="6PGDH_NADP-bd"/>
</dbReference>
<dbReference type="InterPro" id="IPR029154">
    <property type="entry name" value="HIBADH-like_NADP-bd"/>
</dbReference>
<dbReference type="InterPro" id="IPR015815">
    <property type="entry name" value="HIBADH-related"/>
</dbReference>
<dbReference type="InterPro" id="IPR036291">
    <property type="entry name" value="NAD(P)-bd_dom_sf"/>
</dbReference>
<dbReference type="PANTHER" id="PTHR43060">
    <property type="entry name" value="3-HYDROXYISOBUTYRATE DEHYDROGENASE-LIKE 1, MITOCHONDRIAL-RELATED"/>
    <property type="match status" value="1"/>
</dbReference>
<dbReference type="PANTHER" id="PTHR43060:SF15">
    <property type="entry name" value="3-HYDROXYISOBUTYRATE DEHYDROGENASE-LIKE 1, MITOCHONDRIAL-RELATED"/>
    <property type="match status" value="1"/>
</dbReference>
<dbReference type="Pfam" id="PF14833">
    <property type="entry name" value="NAD_binding_11"/>
    <property type="match status" value="1"/>
</dbReference>
<dbReference type="Pfam" id="PF03446">
    <property type="entry name" value="NAD_binding_2"/>
    <property type="match status" value="1"/>
</dbReference>
<dbReference type="PIRSF" id="PIRSF000103">
    <property type="entry name" value="HIBADH"/>
    <property type="match status" value="1"/>
</dbReference>
<dbReference type="SUPFAM" id="SSF48179">
    <property type="entry name" value="6-phosphogluconate dehydrogenase C-terminal domain-like"/>
    <property type="match status" value="1"/>
</dbReference>
<dbReference type="SUPFAM" id="SSF51735">
    <property type="entry name" value="NAD(P)-binding Rossmann-fold domains"/>
    <property type="match status" value="1"/>
</dbReference>
<dbReference type="PROSITE" id="PS00895">
    <property type="entry name" value="3_HYDROXYISOBUT_DH"/>
    <property type="match status" value="1"/>
</dbReference>
<sequence length="288" mass="30711">MKKTIGFIGLGVMGKSMASHILNDGHPVLVYTRTKEKAESILQKGAIWKDTVKDLSKEADVIITMVGYPSDVEEVYFGSNGIIENAKEGAYLIDMTTSKPSLAKKIAEAAKEKALFALDAPVSGGDIGAQNGTLAIMVGGEKEAFEACMPIFSLMGENIQYQGPAGSGQHTKMCNQIAIAAGMIGVAEAMAYAQKSGLEPENVLKSITTGAAGSWSLSNLAPRMLQGNFEPGFYVKHFIKDMGIALEEAELMGEEMPGLSLAKSLYDKLAAQGEENSGTQSIYKLWVK</sequence>
<feature type="chain" id="PRO_0000173068" description="Uncharacterized oxidoreductase YkwC">
    <location>
        <begin position="1"/>
        <end position="288"/>
    </location>
</feature>
<feature type="active site" evidence="1">
    <location>
        <position position="172"/>
    </location>
</feature>
<feature type="binding site" evidence="1">
    <location>
        <begin position="6"/>
        <end position="20"/>
    </location>
    <ligand>
        <name>NAD(+)</name>
        <dbReference type="ChEBI" id="CHEBI:57540"/>
    </ligand>
</feature>
<feature type="binding site" evidence="1">
    <location>
        <position position="97"/>
    </location>
    <ligand>
        <name>NAD(+)</name>
        <dbReference type="ChEBI" id="CHEBI:57540"/>
    </ligand>
</feature>
<feature type="binding site" evidence="1">
    <location>
        <position position="240"/>
    </location>
    <ligand>
        <name>NAD(+)</name>
        <dbReference type="ChEBI" id="CHEBI:57540"/>
    </ligand>
</feature>
<protein>
    <recommendedName>
        <fullName>Uncharacterized oxidoreductase YkwC</fullName>
        <ecNumber>1.1.-.-</ecNumber>
    </recommendedName>
</protein>
<organism>
    <name type="scientific">Bacillus subtilis (strain 168)</name>
    <dbReference type="NCBI Taxonomy" id="224308"/>
    <lineage>
        <taxon>Bacteria</taxon>
        <taxon>Bacillati</taxon>
        <taxon>Bacillota</taxon>
        <taxon>Bacilli</taxon>
        <taxon>Bacillales</taxon>
        <taxon>Bacillaceae</taxon>
        <taxon>Bacillus</taxon>
    </lineage>
</organism>